<sequence length="565" mass="59327">MEDSDSAAKQLGLAEAAAVAAAAAVAAAAAAAAGGEAEEPVLSRDEDSEEDADSEAERETPRVTAVAVMAAEPGHMDMGAEALPGPDEAAAAAAFAEVTTVTVANVGAAADNVFTTSVANAASISGHVLSGRTALQIGDSLNTEKATLIVVHTDGSIVETTGLKGPAAPLTPGPQSPPTPLAPGQEKGGTKYNWDPSVYDSELPVRCRNISGTLYKNRLGSGGRGRCIKQGENWYSPTEFEAMAGRASSKDWKRSIRYAGRPLQCLIQDGILNPHAASCTCAACCDDMTLSGPVRLFVPYKRRKKENELPTTPVKKDSPKNITLLPATAATTFTVTPSGQITTSGALTFDRASTVEATAVISESPAQGDVFAGATVQEASVQPPCRASHPEPHYPGYQDSCQIAPFPEAALPTSHPKIVLTSLPALAVPPPTPTKAAPPALVNGLELSEPRSWLYLEEMVNSLLNTAQQLKTLFEQAKHASTYREAATNQAKIHADAERKEQSCVNCGREAMSECTGCHKVNYCSTFCQRKDWKDHQHICGQSAAVTVQADEVHVAESVMEKVTV</sequence>
<comment type="function">
    <text evidence="8 9 10 12 13 18">Transcription factor that binds to sequence with multiple copies of 5'-TTC[CG]G-3' present in its own promoter and that of the HNRPA2B1 gene. Down-regulates transcription of these genes. Binds to the retinoic acid response element (RARE) 5'-AGGGTTCACCGAAAGTTCA-3'. Activates the proenkephalin gene independently of promoter binding, probably through protein-protein interaction. When secreted, behaves as an inhibitor of cell proliferation, by arresting cells in the G0 or G1 phase. Required for neural tube closure and skeletal patterning. Regulates epithelial cell proliferation and side-branching in the mammary gland. Controls the expression of peripheral tissue antigens in pancreatic lymph nodes. Isoform 1 displays greater transcriptional activity than isoform 4. Isoform 4 may inhibit transcriptional activity of isoform 1 by interacting with isoform 1 and retaining it in the cytoplasm. Transcriptional activator of EIF4G3.</text>
</comment>
<comment type="subunit">
    <text evidence="1 11 15 16 18">Homodimer. Isoform 1 and isoform 4 may form a heterodimer. Interacts with LMO2 and CLIM2 (By similarity). Interacts with LMO4; LMO4 blocks export from nucleus (By similarity). May interact with the corepressors NCOR1 and NCRO2. Identified in a complex with the XRCC5 and XRCC6 heterodimer. Interacts (via the SAND domain) with the DNA-PK complex subunit XRCC6; the interaction is direct and may be inhibited by DNA-binding.</text>
</comment>
<comment type="interaction">
    <interactant intactId="EBI-718185">
        <id>O75398</id>
    </interactant>
    <interactant intactId="EBI-375053">
        <id>P42771</id>
        <label>CDKN2A</label>
    </interactant>
    <organismsDiffer>false</organismsDiffer>
    <experiments>2</experiments>
</comment>
<comment type="interaction">
    <interactant intactId="EBI-718185">
        <id>O75398</id>
    </interactant>
    <interactant intactId="EBI-742887">
        <id>Q8TAP6</id>
        <label>CEP76</label>
    </interactant>
    <organismsDiffer>false</organismsDiffer>
    <experiments>3</experiments>
</comment>
<comment type="interaction">
    <interactant intactId="EBI-718185">
        <id>O75398</id>
    </interactant>
    <interactant intactId="EBI-701903">
        <id>Q14192</id>
        <label>FHL2</label>
    </interactant>
    <organismsDiffer>false</organismsDiffer>
    <experiments>4</experiments>
</comment>
<comment type="interaction">
    <interactant intactId="EBI-718185">
        <id>O75398</id>
    </interactant>
    <interactant intactId="EBI-1044067">
        <id>P49840</id>
        <label>GSK3A</label>
    </interactant>
    <organismsDiffer>false</organismsDiffer>
    <experiments>3</experiments>
</comment>
<comment type="interaction">
    <interactant intactId="EBI-718185">
        <id>O75398</id>
    </interactant>
    <interactant intactId="EBI-373586">
        <id>P49841</id>
        <label>GSK3B</label>
    </interactant>
    <organismsDiffer>false</organismsDiffer>
    <experiments>2</experiments>
</comment>
<comment type="interaction">
    <interactant intactId="EBI-718185">
        <id>O75398</id>
    </interactant>
    <interactant intactId="EBI-1189067">
        <id>P51608</id>
        <label>MECP2</label>
    </interactant>
    <organismsDiffer>false</organismsDiffer>
    <experiments>3</experiments>
</comment>
<comment type="interaction">
    <interactant intactId="EBI-718185">
        <id>O75398</id>
    </interactant>
    <interactant intactId="EBI-985879">
        <id>P37840</id>
        <label>SNCA</label>
    </interactant>
    <organismsDiffer>false</organismsDiffer>
    <experiments>3</experiments>
</comment>
<comment type="interaction">
    <interactant intactId="EBI-718185">
        <id>O75398</id>
    </interactant>
    <interactant intactId="EBI-372899">
        <id>Q13148</id>
        <label>TARDBP</label>
    </interactant>
    <organismsDiffer>false</organismsDiffer>
    <experiments>3</experiments>
</comment>
<comment type="interaction">
    <interactant intactId="EBI-718185">
        <id>O75398</id>
    </interactant>
    <interactant intactId="EBI-353208">
        <id>P12956</id>
        <label>XRCC6</label>
    </interactant>
    <organismsDiffer>false</organismsDiffer>
    <experiments>7</experiments>
</comment>
<comment type="subcellular location">
    <molecule>Isoform 1</molecule>
    <subcellularLocation>
        <location>Nucleus</location>
    </subcellularLocation>
    <subcellularLocation>
        <location>Cytoplasm</location>
    </subcellularLocation>
    <text>Cytoplasmic in non-mucinous colorectal carcinoma. When expressed alone, localized almost exclusively in the nucleus but, when expressed with isoform 4, nuclear expression decreases to 32% and cytoplasmic expression increases by 270%.</text>
</comment>
<comment type="subcellular location">
    <molecule>Isoform 2</molecule>
    <subcellularLocation>
        <location>Secreted</location>
    </subcellularLocation>
    <text>Secreted in some cell types.</text>
</comment>
<comment type="subcellular location">
    <molecule>Isoform 3</molecule>
    <subcellularLocation>
        <location>Secreted</location>
    </subcellularLocation>
    <text>Secreted in some cell types.</text>
</comment>
<comment type="subcellular location">
    <molecule>Isoform 4</molecule>
    <subcellularLocation>
        <location>Cytoplasm</location>
    </subcellularLocation>
    <subcellularLocation>
        <location>Nucleus</location>
    </subcellularLocation>
    <text>When expressed alone, localizes mainly in the cytoplasm but, when expressed with isoform 1, nuclear localization is enhanced.</text>
</comment>
<comment type="alternative products">
    <event type="alternative splicing"/>
    <isoform>
        <id>O75398-1</id>
        <name>1</name>
        <name>Hu-DF1</name>
        <sequence type="displayed"/>
    </isoform>
    <isoform>
        <id>O75398-3</id>
        <name>2</name>
        <name>NUDR8</name>
        <sequence type="described" ref="VSP_005967"/>
    </isoform>
    <isoform>
        <id>O75398-4</id>
        <name>3</name>
        <name>Suppressin</name>
        <sequence type="described" ref="VSP_005966"/>
    </isoform>
    <isoform>
        <id>O75398-5</id>
        <name>4</name>
        <name>Hu-DF1-VAR</name>
        <sequence type="described" ref="VSP_038701 VSP_038702"/>
    </isoform>
</comment>
<comment type="tissue specificity">
    <text evidence="13 18">Expressed in various tissues and cells such as in peripheral mononuclear cells and hormone-secreting pituitary cells. Expression in pancreatic lymph nodes of patients with type 1 diabetes is 20 times higher than in healthy controls. Highly expressed in fetal and adult brain.</text>
</comment>
<comment type="PTM">
    <text evidence="15">May be phosphorylated by DNA-PK complex in a DNA independent manner (in vitro).</text>
</comment>
<comment type="disease" evidence="14 18">
    <disease id="DI-04122">
        <name>Vulto-van Silfout-de Vries syndrome</name>
        <acronym>VSVS</acronym>
        <description>An autosomal dominant disorder characterized by intellectual disability, poor speech, motor delay, and autistic features. Most patients have additional non-specific features, including hypotonia and gait abnormalities, seizures, which may be refractory, high pain threshold, and sleep disturbances.</description>
        <dbReference type="MIM" id="615828"/>
    </disease>
    <text>The disease is caused by variants affecting the gene represented in this entry.</text>
</comment>
<comment type="disease" evidence="19">
    <disease id="DI-04854">
        <name>Neurodevelopmental disorder with hypotonia, impaired expressive language, and with or without seizures</name>
        <acronym>NEDHELS</acronym>
        <description>An autosomal recessive disorder characterized by psychomotor delay, epilepsy, intellectual disability, speech impairment and dyskinesia of the limbs. Patients also manifest autistic features and other behavioral abnormalities.</description>
        <dbReference type="MIM" id="617171"/>
    </disease>
    <text>The disease is caused by variants affecting the gene represented in this entry.</text>
</comment>
<comment type="miscellaneous">
    <text>Defective DEAF1 could confer a growth advantage to the mutated cells influencing the development and progression of neoplasia, e.g. in the case of colorectal carcinomas. Subcellular location in colorectal carcinomas (cytoplasmic or nuclear) is a prognostic factor that identifies a subgroup of patients with reduced survival. In addition, changes in the subcellular location correlates with the proliferative status of the cells.</text>
</comment>
<comment type="miscellaneous">
    <molecule>Isoform 3</molecule>
    <text evidence="26">Has no predictable signal peptide.</text>
</comment>
<comment type="caution">
    <text evidence="26">This protein was first known as suppressin (characterized in bovine neuroendocrine and immune cells). However, according to PubMed:9773984, it is uncertain whether it corresponds really to the suppressin also described in Ref.4. DEAF1 has been described as a nuclear dimeric protein and suppressin as a secreted monomeric protein.</text>
</comment>
<comment type="sequence caution" evidence="26">
    <conflict type="miscellaneous discrepancy">
        <sequence resource="EMBL-CDS" id="AAC25718"/>
    </conflict>
    <text>Several sequencing errors.</text>
</comment>
<comment type="sequence caution" evidence="26">
    <conflict type="frameshift">
        <sequence resource="EMBL-CDS" id="AAC25719"/>
    </conflict>
</comment>
<comment type="sequence caution" evidence="26">
    <molecule>Isoform 3</molecule>
    <conflict type="frameshift">
        <sequence resource="EMBL-CDS" id="AAC25718"/>
    </conflict>
</comment>
<comment type="sequence caution" evidence="26">
    <molecule>Isoform 3</molecule>
    <conflict type="frameshift">
        <sequence resource="EMBL-CDS" id="AAC25719"/>
    </conflict>
</comment>
<feature type="chain" id="PRO_0000074084" description="Deformed epidermal autoregulatory factor 1 homolog">
    <location>
        <begin position="1"/>
        <end position="565"/>
    </location>
</feature>
<feature type="domain" description="SAND" evidence="6">
    <location>
        <begin position="193"/>
        <end position="273"/>
    </location>
</feature>
<feature type="zinc finger region" description="MYND-type" evidence="5">
    <location>
        <begin position="504"/>
        <end position="540"/>
    </location>
</feature>
<feature type="region of interest" description="Disordered" evidence="7">
    <location>
        <begin position="34"/>
        <end position="62"/>
    </location>
</feature>
<feature type="region of interest" description="Disordered" evidence="7">
    <location>
        <begin position="162"/>
        <end position="190"/>
    </location>
</feature>
<feature type="region of interest" description="Interaction with LMO4" evidence="1">
    <location>
        <begin position="403"/>
        <end position="478"/>
    </location>
</feature>
<feature type="short sequence motif" description="Nuclear localization signal" evidence="4">
    <location>
        <begin position="301"/>
        <end position="316"/>
    </location>
</feature>
<feature type="compositionally biased region" description="Pro residues" evidence="7">
    <location>
        <begin position="169"/>
        <end position="181"/>
    </location>
</feature>
<feature type="binding site" evidence="5">
    <location>
        <position position="504"/>
    </location>
    <ligand>
        <name>Zn(2+)</name>
        <dbReference type="ChEBI" id="CHEBI:29105"/>
        <label>1</label>
    </ligand>
</feature>
<feature type="binding site" evidence="5">
    <location>
        <position position="507"/>
    </location>
    <ligand>
        <name>Zn(2+)</name>
        <dbReference type="ChEBI" id="CHEBI:29105"/>
        <label>1</label>
    </ligand>
</feature>
<feature type="binding site" evidence="5">
    <location>
        <position position="515"/>
    </location>
    <ligand>
        <name>Zn(2+)</name>
        <dbReference type="ChEBI" id="CHEBI:29105"/>
        <label>2</label>
    </ligand>
</feature>
<feature type="binding site" evidence="5">
    <location>
        <position position="518"/>
    </location>
    <ligand>
        <name>Zn(2+)</name>
        <dbReference type="ChEBI" id="CHEBI:29105"/>
        <label>2</label>
    </ligand>
</feature>
<feature type="binding site" evidence="5">
    <location>
        <position position="524"/>
    </location>
    <ligand>
        <name>Zn(2+)</name>
        <dbReference type="ChEBI" id="CHEBI:29105"/>
        <label>1</label>
    </ligand>
</feature>
<feature type="binding site" evidence="5">
    <location>
        <position position="528"/>
    </location>
    <ligand>
        <name>Zn(2+)</name>
        <dbReference type="ChEBI" id="CHEBI:29105"/>
        <label>1</label>
    </ligand>
</feature>
<feature type="binding site" evidence="5">
    <location>
        <position position="536"/>
    </location>
    <ligand>
        <name>Zn(2+)</name>
        <dbReference type="ChEBI" id="CHEBI:29105"/>
        <label>2</label>
    </ligand>
</feature>
<feature type="binding site" evidence="5">
    <location>
        <position position="540"/>
    </location>
    <ligand>
        <name>Zn(2+)</name>
        <dbReference type="ChEBI" id="CHEBI:29105"/>
        <label>2</label>
    </ligand>
</feature>
<feature type="modified residue" description="Phosphothreonine" evidence="3">
    <location>
        <position position="171"/>
    </location>
</feature>
<feature type="modified residue" description="Phosphoserine" evidence="27">
    <location>
        <position position="176"/>
    </location>
</feature>
<feature type="modified residue" description="Phosphothreonine" evidence="3">
    <location>
        <position position="179"/>
    </location>
</feature>
<feature type="modified residue" description="Phosphothreonine" evidence="27">
    <location>
        <position position="432"/>
    </location>
</feature>
<feature type="modified residue" description="Phosphoserine" evidence="2">
    <location>
        <position position="448"/>
    </location>
</feature>
<feature type="splice variant" id="VSP_005966" description="In isoform 3." evidence="21 22 25">
    <location>
        <begin position="1"/>
        <end position="68"/>
    </location>
</feature>
<feature type="splice variant" id="VSP_005967" description="In isoform 2." evidence="24">
    <original>EAAAVAAAAAVAAAA</original>
    <variation>D</variation>
    <location>
        <begin position="15"/>
        <end position="29"/>
    </location>
</feature>
<feature type="splice variant" id="VSP_038701" description="In isoform 4." evidence="23">
    <original>GRGRCIKQGENWYSPTEFEAMAGRASSKDWKRSIRYAGRPLQCLIQDGILNPHAASCTCAACCDDMTLSGPVRLFVPYKRRKKENELPTTPVKKDSPKNITLLPATAATTF</original>
    <variation>WDLKPSRCLLHLCCLLRRHDLI</variation>
    <location>
        <begin position="223"/>
        <end position="333"/>
    </location>
</feature>
<feature type="splice variant" id="VSP_038702" description="In isoform 4." evidence="23">
    <original>E</original>
    <variation>EVIHPPRLPKVLGLQ</variation>
    <location>
        <position position="501"/>
    </location>
</feature>
<feature type="sequence variant" id="VAR_013725" description="In a primary colorectal cancer; dbSNP:rs751727919." evidence="10">
    <original>E</original>
    <variation>V</variation>
    <location>
        <position position="186"/>
    </location>
</feature>
<feature type="sequence variant" id="VAR_013726" description="In a primary colorectal cancer." evidence="10">
    <original>K</original>
    <variation>I</variation>
    <location>
        <position position="191"/>
    </location>
</feature>
<feature type="sequence variant" id="VAR_013727" description="In a primary colorectal cancer." evidence="10">
    <original>K</original>
    <variation>N</variation>
    <location>
        <position position="191"/>
    </location>
</feature>
<feature type="sequence variant" id="VAR_013728" description="In a primary colorectal cancer." evidence="10">
    <original>YDSE</original>
    <variation>CDND</variation>
    <location>
        <begin position="199"/>
        <end position="202"/>
    </location>
</feature>
<feature type="sequence variant" id="VAR_013729" description="In a primary colorectal cancer." evidence="10">
    <original>E</original>
    <variation>D</variation>
    <location>
        <position position="202"/>
    </location>
</feature>
<feature type="sequence variant" id="VAR_013730" description="In a primary colorectal cancer; dbSNP:rs1127312." evidence="10">
    <original>R</original>
    <variation>K</variation>
    <location>
        <position position="218"/>
    </location>
</feature>
<feature type="sequence variant" id="VAR_071371" description="In VSVS; loss of DEAF1-promoter repression; loss of transcriptional activation of EIF4G3; loss of DNA binding; decreased interaction with XRCC6; dbSNP:rs587777408." evidence="18">
    <original>R</original>
    <variation>W</variation>
    <location>
        <position position="224"/>
    </location>
</feature>
<feature type="sequence variant" id="VAR_071372" description="In dbSNP:rs587777623." evidence="17">
    <original>R</original>
    <variation>W</variation>
    <location>
        <position position="226"/>
    </location>
</feature>
<feature type="sequence variant" id="VAR_065089" description="In VSVS; loss of DEAF1-promoter repression; loss of transcriptional activation of EIF4G3; loss of DNA binding; loss of interaction with XRCC6; dbSNP:rs587777406." evidence="14 18">
    <original>I</original>
    <variation>S</variation>
    <location>
        <position position="228"/>
    </location>
</feature>
<feature type="sequence variant" id="VAR_071373" description="In VSVS; loss of DEAF1-promoter repression; gain of transcriptional activation of EIF4G3; a 9-fold reduction in DNA binding; dbSNP:rs587777409." evidence="18">
    <original>R</original>
    <variation>S</variation>
    <location>
        <position position="254"/>
    </location>
</feature>
<feature type="sequence variant" id="VAR_071374" description="In VSVS; loss of DEAF1-promoter repression; loss of transcriptional activation of EIF4G3; loss of DNA binding; loss of interaction with XRCC6; dbSNP:rs587777407." evidence="18">
    <original>Q</original>
    <variation>P</variation>
    <location>
        <position position="264"/>
    </location>
</feature>
<feature type="sequence variant" id="VAR_013731" description="In a primary colorectal cancer." evidence="10">
    <original>DRA</original>
    <variation>GQT</variation>
    <location>
        <begin position="350"/>
        <end position="352"/>
    </location>
</feature>
<feature type="sequence variant" id="VAR_013732" description="In a primary colorectal cancer; requires 2 nucleotide substitutions." evidence="10">
    <original>E</original>
    <variation>H</variation>
    <location>
        <position position="356"/>
    </location>
</feature>
<feature type="sequence variant" id="VAR_013733" description="In a primary colorectal cancer." evidence="10">
    <original>S</original>
    <variation>N</variation>
    <location>
        <position position="364"/>
    </location>
</feature>
<feature type="sequence variant" id="VAR_013734" description="In a primary colorectal cancer." evidence="10">
    <original>Q</original>
    <variation>H</variation>
    <location>
        <position position="367"/>
    </location>
</feature>
<feature type="sequence variant" id="VAR_013735" description="In a primary colorectal cancer." evidence="10">
    <original>V</original>
    <variation>L</variation>
    <location>
        <position position="370"/>
    </location>
</feature>
<feature type="sequence variant" id="VAR_013736" description="In a primary colorectal cancer." evidence="10">
    <original>Y</original>
    <variation>F</variation>
    <location>
        <position position="397"/>
    </location>
</feature>
<feature type="sequence variant" id="VAR_013737" description="In a primary colorectal cancer." evidence="10">
    <original>V</original>
    <variation>A</variation>
    <location>
        <position position="442"/>
    </location>
</feature>
<feature type="sequence variant" id="VAR_013738" description="In a primary colorectal cancer." evidence="10">
    <original>E</original>
    <variation>K</variation>
    <location>
        <position position="449"/>
    </location>
</feature>
<feature type="sequence variant" id="VAR_013739" description="In a primary colorectal cancer." evidence="10">
    <original>RS</original>
    <variation>GI</variation>
    <location>
        <begin position="451"/>
        <end position="452"/>
    </location>
</feature>
<feature type="sequence variant" id="VAR_013740" description="In a primary colorectal cancer." evidence="10">
    <original>Q</original>
    <variation>H</variation>
    <location>
        <position position="468"/>
    </location>
</feature>
<feature type="sequence variant" id="VAR_013741" description="In a primary colorectal cancer." evidence="10">
    <original>H</original>
    <variation>L</variation>
    <location>
        <position position="479"/>
    </location>
</feature>
<feature type="sequence variant" id="VAR_013742" description="In a primary colorectal cancer." evidence="10">
    <original>E</original>
    <variation>K</variation>
    <location>
        <position position="498"/>
    </location>
</feature>
<feature type="sequence variant" id="VAR_013743" description="In a primary colorectal cancer." evidence="10">
    <original>T</original>
    <variation>N</variation>
    <location>
        <position position="526"/>
    </location>
</feature>
<feature type="sequence variant" id="VAR_013744" description="In a primary colorectal cancer." evidence="10">
    <original>R</original>
    <variation>L</variation>
    <location>
        <position position="530"/>
    </location>
</feature>
<feature type="sequence variant" id="VAR_013745" description="In a primary colorectal cancer." evidence="10">
    <original>QH</original>
    <variation>HL</variation>
    <location>
        <begin position="537"/>
        <end position="538"/>
    </location>
</feature>
<feature type="sequence variant" id="VAR_013746" description="In a primary colorectal cancer." evidence="10">
    <original>Q</original>
    <variation>H</variation>
    <location>
        <position position="542"/>
    </location>
</feature>
<feature type="sequence variant" id="VAR_013747" description="In a primary colorectal cancer; dbSNP:rs34114147." evidence="10">
    <original>A</original>
    <variation>G</variation>
    <location>
        <position position="545"/>
    </location>
</feature>
<feature type="sequence variant" id="VAR_013748" description="In a primary colorectal cancer." evidence="10">
    <original>A</original>
    <variation>V</variation>
    <location>
        <position position="545"/>
    </location>
</feature>
<feature type="mutagenesis site" description="Reduces transcription activation." evidence="9">
    <original>Y</original>
    <variation>Q</variation>
    <location>
        <position position="215"/>
    </location>
</feature>
<feature type="mutagenesis site" description="Reduces transcription activation." evidence="9">
    <original>R</original>
    <variation>A</variation>
    <location>
        <position position="226"/>
    </location>
</feature>
<feature type="mutagenesis site" description="Reduces transcription activation." evidence="9">
    <original>R</original>
    <variation>A</variation>
    <location>
        <position position="246"/>
    </location>
</feature>
<feature type="mutagenesis site" description="Abolishes DNA-binding. Loss of DEAF1-promoter repression; when associated with A-253. Loss of transcriptional activation of EIF4G3; when associated with A-253. Loss of interaction with XRCC6; when associated with A-253. Loss of DNA binding; when associated with A-253." evidence="9 18">
    <original>K</original>
    <variation>A</variation>
    <location>
        <position position="250"/>
    </location>
</feature>
<feature type="mutagenesis site" description="Abolishes DNA-binding." evidence="9">
    <original>W</original>
    <variation>Q</variation>
    <location>
        <position position="252"/>
    </location>
</feature>
<feature type="mutagenesis site" description="Abolishes DNA-binding. oss of DEAF1-promoter repression; when associated with A-250. Loss of transcriptional activation of EIF4G3; when associated with A-250. Loss of interaction with XRCC6; when associated with A-250. Loss of DNA binding; when associated with A-250." evidence="9 18">
    <original>K</original>
    <variation>A</variation>
    <location>
        <position position="253"/>
    </location>
</feature>
<feature type="mutagenesis site" description="Abolishes nuclear localization." evidence="20">
    <original>R</original>
    <variation>T</variation>
    <location>
        <position position="302"/>
    </location>
</feature>
<feature type="mutagenesis site" description="Abolishes nuclear localization." evidence="20">
    <original>K</original>
    <variation>T</variation>
    <location>
        <position position="304"/>
    </location>
</feature>
<feature type="mutagenesis site" description="No effect on folding of MYND-type zinc finger." evidence="16">
    <original>H</original>
    <variation>S</variation>
    <location>
        <position position="538"/>
    </location>
</feature>
<feature type="sequence conflict" description="In Ref. 3; ACU88060." evidence="26" ref="3">
    <original>A</original>
    <variation>E</variation>
    <location>
        <position position="65"/>
    </location>
</feature>
<feature type="sequence conflict" description="In Ref. 4; AAB62704." evidence="26" ref="4">
    <original>E</original>
    <variation>D</variation>
    <location>
        <position position="72"/>
    </location>
</feature>
<feature type="sequence conflict" description="In Ref. 3; ACU88060." evidence="26" ref="3">
    <original>P</original>
    <variation>Q</variation>
    <location>
        <position position="166"/>
    </location>
</feature>
<feature type="sequence conflict" description="In Ref. 4; AAB62704." evidence="26" ref="4">
    <original>A</original>
    <variation>T</variation>
    <location>
        <position position="247"/>
    </location>
</feature>
<feature type="sequence conflict" description="In Ref. 4; AAB62704." evidence="26" ref="4">
    <original>V</original>
    <variation>L</variation>
    <location>
        <position position="294"/>
    </location>
</feature>
<feature type="sequence conflict" description="In Ref. 3; ACU88060." evidence="26" ref="3">
    <original>D</original>
    <variation>G</variation>
    <location>
        <position position="399"/>
    </location>
</feature>
<feature type="sequence conflict" description="In Ref. 4; AAB62704." evidence="26" ref="4">
    <original>N</original>
    <variation>K</variation>
    <location>
        <position position="522"/>
    </location>
</feature>
<feature type="helix" evidence="29">
    <location>
        <begin position="456"/>
        <end position="463"/>
    </location>
</feature>
<feature type="strand" evidence="28">
    <location>
        <begin position="505"/>
        <end position="510"/>
    </location>
</feature>
<feature type="strand" evidence="28">
    <location>
        <begin position="512"/>
        <end position="514"/>
    </location>
</feature>
<feature type="turn" evidence="28">
    <location>
        <begin position="516"/>
        <end position="518"/>
    </location>
</feature>
<feature type="strand" evidence="28">
    <location>
        <begin position="520"/>
        <end position="525"/>
    </location>
</feature>
<feature type="helix" evidence="28">
    <location>
        <begin position="526"/>
        <end position="532"/>
    </location>
</feature>
<feature type="turn" evidence="28">
    <location>
        <begin position="533"/>
        <end position="535"/>
    </location>
</feature>
<feature type="helix" evidence="28">
    <location>
        <begin position="536"/>
        <end position="538"/>
    </location>
</feature>
<feature type="turn" evidence="28">
    <location>
        <begin position="539"/>
        <end position="541"/>
    </location>
</feature>
<evidence type="ECO:0000250" key="1"/>
<evidence type="ECO:0000250" key="2">
    <source>
        <dbReference type="UniProtKB" id="O88450"/>
    </source>
</evidence>
<evidence type="ECO:0000250" key="3">
    <source>
        <dbReference type="UniProtKB" id="Q9Z1T5"/>
    </source>
</evidence>
<evidence type="ECO:0000255" key="4"/>
<evidence type="ECO:0000255" key="5">
    <source>
        <dbReference type="PROSITE-ProRule" id="PRU00134"/>
    </source>
</evidence>
<evidence type="ECO:0000255" key="6">
    <source>
        <dbReference type="PROSITE-ProRule" id="PRU00185"/>
    </source>
</evidence>
<evidence type="ECO:0000256" key="7">
    <source>
        <dbReference type="SAM" id="MobiDB-lite"/>
    </source>
</evidence>
<evidence type="ECO:0000269" key="8">
    <source>
    </source>
</evidence>
<evidence type="ECO:0000269" key="9">
    <source>
    </source>
</evidence>
<evidence type="ECO:0000269" key="10">
    <source>
    </source>
</evidence>
<evidence type="ECO:0000269" key="11">
    <source>
    </source>
</evidence>
<evidence type="ECO:0000269" key="12">
    <source>
    </source>
</evidence>
<evidence type="ECO:0000269" key="13">
    <source>
    </source>
</evidence>
<evidence type="ECO:0000269" key="14">
    <source>
    </source>
</evidence>
<evidence type="ECO:0000269" key="15">
    <source>
    </source>
</evidence>
<evidence type="ECO:0000269" key="16">
    <source>
    </source>
</evidence>
<evidence type="ECO:0000269" key="17">
    <source>
    </source>
</evidence>
<evidence type="ECO:0000269" key="18">
    <source>
    </source>
</evidence>
<evidence type="ECO:0000269" key="19">
    <source>
    </source>
</evidence>
<evidence type="ECO:0000269" key="20">
    <source>
    </source>
</evidence>
<evidence type="ECO:0000303" key="21">
    <source>
    </source>
</evidence>
<evidence type="ECO:0000303" key="22">
    <source>
    </source>
</evidence>
<evidence type="ECO:0000303" key="23">
    <source>
    </source>
</evidence>
<evidence type="ECO:0000303" key="24">
    <source>
    </source>
</evidence>
<evidence type="ECO:0000303" key="25">
    <source ref="4"/>
</evidence>
<evidence type="ECO:0000305" key="26"/>
<evidence type="ECO:0007744" key="27">
    <source>
    </source>
</evidence>
<evidence type="ECO:0007829" key="28">
    <source>
        <dbReference type="PDB" id="2JW6"/>
    </source>
</evidence>
<evidence type="ECO:0007829" key="29">
    <source>
        <dbReference type="PDB" id="5UWW"/>
    </source>
</evidence>
<proteinExistence type="evidence at protein level"/>
<name>DEAF1_HUMAN</name>
<dbReference type="EMBL" id="AF049459">
    <property type="protein sequence ID" value="AAC79676.1"/>
    <property type="molecule type" value="mRNA"/>
</dbReference>
<dbReference type="EMBL" id="AF049460">
    <property type="protein sequence ID" value="AAC79677.1"/>
    <property type="molecule type" value="mRNA"/>
</dbReference>
<dbReference type="EMBL" id="AF068893">
    <property type="protein sequence ID" value="AAC25715.1"/>
    <property type="molecule type" value="mRNA"/>
</dbReference>
<dbReference type="EMBL" id="AF068894">
    <property type="protein sequence ID" value="AAC25716.1"/>
    <property type="molecule type" value="mRNA"/>
</dbReference>
<dbReference type="EMBL" id="AF068895">
    <property type="protein sequence ID" value="AAC25717.1"/>
    <property type="molecule type" value="mRNA"/>
</dbReference>
<dbReference type="EMBL" id="AF068896">
    <property type="protein sequence ID" value="AAC25718.1"/>
    <property type="status" value="ALT_SEQ"/>
    <property type="molecule type" value="mRNA"/>
</dbReference>
<dbReference type="EMBL" id="AF068897">
    <property type="protein sequence ID" value="AAC25719.1"/>
    <property type="status" value="ALT_FRAME"/>
    <property type="molecule type" value="mRNA"/>
</dbReference>
<dbReference type="EMBL" id="FJ985253">
    <property type="protein sequence ID" value="ACU88060.1"/>
    <property type="molecule type" value="mRNA"/>
</dbReference>
<dbReference type="EMBL" id="AF007165">
    <property type="protein sequence ID" value="AAB62704.1"/>
    <property type="molecule type" value="mRNA"/>
</dbReference>
<dbReference type="EMBL" id="AK291383">
    <property type="protein sequence ID" value="BAF84072.1"/>
    <property type="molecule type" value="mRNA"/>
</dbReference>
<dbReference type="EMBL" id="AK289873">
    <property type="protein sequence ID" value="BAF82562.1"/>
    <property type="molecule type" value="mRNA"/>
</dbReference>
<dbReference type="EMBL" id="BC053322">
    <property type="protein sequence ID" value="AAH53322.1"/>
    <property type="molecule type" value="mRNA"/>
</dbReference>
<dbReference type="CCDS" id="CCDS31327.1">
    <molecule id="O75398-1"/>
</dbReference>
<dbReference type="RefSeq" id="NP_001280563.1">
    <molecule id="O75398-5"/>
    <property type="nucleotide sequence ID" value="NM_001293634.1"/>
</dbReference>
<dbReference type="RefSeq" id="NP_066288.2">
    <molecule id="O75398-1"/>
    <property type="nucleotide sequence ID" value="NM_021008.3"/>
</dbReference>
<dbReference type="PDB" id="2JW6">
    <property type="method" value="NMR"/>
    <property type="chains" value="A=496-544"/>
</dbReference>
<dbReference type="PDB" id="4A24">
    <property type="method" value="NMR"/>
    <property type="chains" value="A=501-544"/>
</dbReference>
<dbReference type="PDB" id="5UWW">
    <property type="method" value="X-ray"/>
    <property type="resolution" value="2.15 A"/>
    <property type="chains" value="D=452-469"/>
</dbReference>
<dbReference type="PDBsum" id="2JW6"/>
<dbReference type="PDBsum" id="4A24"/>
<dbReference type="PDBsum" id="5UWW"/>
<dbReference type="BMRB" id="O75398"/>
<dbReference type="SMR" id="O75398"/>
<dbReference type="BioGRID" id="115777">
    <property type="interactions" value="46"/>
</dbReference>
<dbReference type="CORUM" id="O75398"/>
<dbReference type="ELM" id="O75398"/>
<dbReference type="FunCoup" id="O75398">
    <property type="interactions" value="2168"/>
</dbReference>
<dbReference type="IntAct" id="O75398">
    <property type="interactions" value="31"/>
</dbReference>
<dbReference type="MINT" id="O75398"/>
<dbReference type="STRING" id="9606.ENSP00000371846"/>
<dbReference type="GlyGen" id="O75398">
    <property type="glycosylation" value="2 sites, 1 O-linked glycan (1 site)"/>
</dbReference>
<dbReference type="iPTMnet" id="O75398"/>
<dbReference type="PhosphoSitePlus" id="O75398"/>
<dbReference type="BioMuta" id="DEAF1"/>
<dbReference type="jPOST" id="O75398"/>
<dbReference type="MassIVE" id="O75398"/>
<dbReference type="PaxDb" id="9606-ENSP00000371846"/>
<dbReference type="PeptideAtlas" id="O75398"/>
<dbReference type="ProteomicsDB" id="49968">
    <molecule id="O75398-1"/>
</dbReference>
<dbReference type="ProteomicsDB" id="49969">
    <molecule id="O75398-3"/>
</dbReference>
<dbReference type="ProteomicsDB" id="49970">
    <molecule id="O75398-4"/>
</dbReference>
<dbReference type="ProteomicsDB" id="49971">
    <molecule id="O75398-5"/>
</dbReference>
<dbReference type="Antibodypedia" id="9854">
    <property type="antibodies" value="334 antibodies from 31 providers"/>
</dbReference>
<dbReference type="DNASU" id="10522"/>
<dbReference type="Ensembl" id="ENST00000382409.4">
    <molecule id="O75398-1"/>
    <property type="protein sequence ID" value="ENSP00000371846.3"/>
    <property type="gene ID" value="ENSG00000177030.19"/>
</dbReference>
<dbReference type="GeneID" id="10522"/>
<dbReference type="KEGG" id="hsa:10522"/>
<dbReference type="MANE-Select" id="ENST00000382409.4">
    <property type="protein sequence ID" value="ENSP00000371846.3"/>
    <property type="RefSeq nucleotide sequence ID" value="NM_021008.4"/>
    <property type="RefSeq protein sequence ID" value="NP_066288.2"/>
</dbReference>
<dbReference type="UCSC" id="uc001lqq.2">
    <molecule id="O75398-1"/>
    <property type="organism name" value="human"/>
</dbReference>
<dbReference type="AGR" id="HGNC:14677"/>
<dbReference type="CTD" id="10522"/>
<dbReference type="DisGeNET" id="10522"/>
<dbReference type="GeneCards" id="DEAF1"/>
<dbReference type="HGNC" id="HGNC:14677">
    <property type="gene designation" value="DEAF1"/>
</dbReference>
<dbReference type="HPA" id="ENSG00000177030">
    <property type="expression patterns" value="Tissue enriched (brain)"/>
</dbReference>
<dbReference type="MalaCards" id="DEAF1"/>
<dbReference type="MIM" id="602635">
    <property type="type" value="gene"/>
</dbReference>
<dbReference type="MIM" id="615828">
    <property type="type" value="phenotype"/>
</dbReference>
<dbReference type="MIM" id="617171">
    <property type="type" value="phenotype"/>
</dbReference>
<dbReference type="neXtProt" id="NX_O75398"/>
<dbReference type="OpenTargets" id="ENSG00000177030"/>
<dbReference type="Orphanet" id="178469">
    <property type="disease" value="Autosomal dominant non-syndromic intellectual disability"/>
</dbReference>
<dbReference type="Orphanet" id="468620">
    <property type="disease" value="Intellectual disability-epilepsy-extrapyramidal syndrome"/>
</dbReference>
<dbReference type="Orphanet" id="819">
    <property type="disease" value="Smith-Magenis syndrome"/>
</dbReference>
<dbReference type="PharmGKB" id="PA27234"/>
<dbReference type="VEuPathDB" id="HostDB:ENSG00000177030"/>
<dbReference type="eggNOG" id="KOG4333">
    <property type="taxonomic scope" value="Eukaryota"/>
</dbReference>
<dbReference type="GeneTree" id="ENSGT00940000159701"/>
<dbReference type="HOGENOM" id="CLU_039056_1_0_1"/>
<dbReference type="InParanoid" id="O75398"/>
<dbReference type="OMA" id="KDHQHSC"/>
<dbReference type="OrthoDB" id="9536545at2759"/>
<dbReference type="PAN-GO" id="O75398">
    <property type="GO annotations" value="3 GO annotations based on evolutionary models"/>
</dbReference>
<dbReference type="PhylomeDB" id="O75398"/>
<dbReference type="TreeFam" id="TF325664"/>
<dbReference type="PathwayCommons" id="O75398"/>
<dbReference type="SignaLink" id="O75398"/>
<dbReference type="SIGNOR" id="O75398"/>
<dbReference type="BioGRID-ORCS" id="10522">
    <property type="hits" value="13 hits in 1177 CRISPR screens"/>
</dbReference>
<dbReference type="ChiTaRS" id="DEAF1">
    <property type="organism name" value="human"/>
</dbReference>
<dbReference type="EvolutionaryTrace" id="O75398"/>
<dbReference type="GenomeRNAi" id="10522"/>
<dbReference type="Pharos" id="O75398">
    <property type="development level" value="Tbio"/>
</dbReference>
<dbReference type="PRO" id="PR:O75398"/>
<dbReference type="Proteomes" id="UP000005640">
    <property type="component" value="Chromosome 11"/>
</dbReference>
<dbReference type="RNAct" id="O75398">
    <property type="molecule type" value="protein"/>
</dbReference>
<dbReference type="Bgee" id="ENSG00000177030">
    <property type="expression patterns" value="Expressed in amygdala and 98 other cell types or tissues"/>
</dbReference>
<dbReference type="ExpressionAtlas" id="O75398">
    <property type="expression patterns" value="baseline and differential"/>
</dbReference>
<dbReference type="GO" id="GO:0000785">
    <property type="term" value="C:chromatin"/>
    <property type="evidence" value="ECO:0000247"/>
    <property type="project" value="NTNU_SB"/>
</dbReference>
<dbReference type="GO" id="GO:0005737">
    <property type="term" value="C:cytoplasm"/>
    <property type="evidence" value="ECO:0000314"/>
    <property type="project" value="UniProtKB"/>
</dbReference>
<dbReference type="GO" id="GO:0005576">
    <property type="term" value="C:extracellular region"/>
    <property type="evidence" value="ECO:0007669"/>
    <property type="project" value="UniProtKB-SubCell"/>
</dbReference>
<dbReference type="GO" id="GO:0001650">
    <property type="term" value="C:fibrillar center"/>
    <property type="evidence" value="ECO:0000314"/>
    <property type="project" value="HPA"/>
</dbReference>
<dbReference type="GO" id="GO:0005654">
    <property type="term" value="C:nucleoplasm"/>
    <property type="evidence" value="ECO:0000314"/>
    <property type="project" value="HPA"/>
</dbReference>
<dbReference type="GO" id="GO:0005634">
    <property type="term" value="C:nucleus"/>
    <property type="evidence" value="ECO:0000314"/>
    <property type="project" value="UniProtKB"/>
</dbReference>
<dbReference type="GO" id="GO:0090575">
    <property type="term" value="C:RNA polymerase II transcription regulator complex"/>
    <property type="evidence" value="ECO:0007669"/>
    <property type="project" value="Ensembl"/>
</dbReference>
<dbReference type="GO" id="GO:0000981">
    <property type="term" value="F:DNA-binding transcription factor activity, RNA polymerase II-specific"/>
    <property type="evidence" value="ECO:0000247"/>
    <property type="project" value="NTNU_SB"/>
</dbReference>
<dbReference type="GO" id="GO:0001227">
    <property type="term" value="F:DNA-binding transcription repressor activity, RNA polymerase II-specific"/>
    <property type="evidence" value="ECO:0000314"/>
    <property type="project" value="NTNU_SB"/>
</dbReference>
<dbReference type="GO" id="GO:0000977">
    <property type="term" value="F:RNA polymerase II transcription regulatory region sequence-specific DNA binding"/>
    <property type="evidence" value="ECO:0000314"/>
    <property type="project" value="NTNU_SB"/>
</dbReference>
<dbReference type="GO" id="GO:0008270">
    <property type="term" value="F:zinc ion binding"/>
    <property type="evidence" value="ECO:0007669"/>
    <property type="project" value="UniProtKB-KW"/>
</dbReference>
<dbReference type="GO" id="GO:0009653">
    <property type="term" value="P:anatomical structure morphogenesis"/>
    <property type="evidence" value="ECO:0000304"/>
    <property type="project" value="ProtInc"/>
</dbReference>
<dbReference type="GO" id="GO:0001662">
    <property type="term" value="P:behavioral fear response"/>
    <property type="evidence" value="ECO:0007669"/>
    <property type="project" value="Ensembl"/>
</dbReference>
<dbReference type="GO" id="GO:0048706">
    <property type="term" value="P:embryonic skeletal system development"/>
    <property type="evidence" value="ECO:0000250"/>
    <property type="project" value="UniProtKB"/>
</dbReference>
<dbReference type="GO" id="GO:0007281">
    <property type="term" value="P:germ cell development"/>
    <property type="evidence" value="ECO:0000304"/>
    <property type="project" value="ProtInc"/>
</dbReference>
<dbReference type="GO" id="GO:0045892">
    <property type="term" value="P:negative regulation of DNA-templated transcription"/>
    <property type="evidence" value="ECO:0000314"/>
    <property type="project" value="UniProtKB"/>
</dbReference>
<dbReference type="GO" id="GO:0000122">
    <property type="term" value="P:negative regulation of transcription by RNA polymerase II"/>
    <property type="evidence" value="ECO:0000314"/>
    <property type="project" value="NTNU_SB"/>
</dbReference>
<dbReference type="GO" id="GO:0001843">
    <property type="term" value="P:neural tube closure"/>
    <property type="evidence" value="ECO:0000250"/>
    <property type="project" value="UniProtKB"/>
</dbReference>
<dbReference type="GO" id="GO:0045893">
    <property type="term" value="P:positive regulation of DNA-templated transcription"/>
    <property type="evidence" value="ECO:0000314"/>
    <property type="project" value="UniProtKB"/>
</dbReference>
<dbReference type="GO" id="GO:0033599">
    <property type="term" value="P:regulation of mammary gland epithelial cell proliferation"/>
    <property type="evidence" value="ECO:0000314"/>
    <property type="project" value="UniProtKB"/>
</dbReference>
<dbReference type="GO" id="GO:0006357">
    <property type="term" value="P:regulation of transcription by RNA polymerase II"/>
    <property type="evidence" value="ECO:0000318"/>
    <property type="project" value="GO_Central"/>
</dbReference>
<dbReference type="GO" id="GO:0006366">
    <property type="term" value="P:transcription by RNA polymerase II"/>
    <property type="evidence" value="ECO:0000304"/>
    <property type="project" value="ProtInc"/>
</dbReference>
<dbReference type="GO" id="GO:0008542">
    <property type="term" value="P:visual learning"/>
    <property type="evidence" value="ECO:0007669"/>
    <property type="project" value="Ensembl"/>
</dbReference>
<dbReference type="FunFam" id="3.10.390.10:FF:000004">
    <property type="entry name" value="Deformed epidermal autoregulatory factor 1"/>
    <property type="match status" value="1"/>
</dbReference>
<dbReference type="FunFam" id="6.10.140.2220:FF:000008">
    <property type="entry name" value="Deformed epidermal autoregulatory factor 1"/>
    <property type="match status" value="1"/>
</dbReference>
<dbReference type="Gene3D" id="6.10.140.2220">
    <property type="match status" value="1"/>
</dbReference>
<dbReference type="Gene3D" id="3.10.390.10">
    <property type="entry name" value="SAND domain-like"/>
    <property type="match status" value="1"/>
</dbReference>
<dbReference type="InterPro" id="IPR010919">
    <property type="entry name" value="SAND-like_dom_sf"/>
</dbReference>
<dbReference type="InterPro" id="IPR000770">
    <property type="entry name" value="SAND_dom"/>
</dbReference>
<dbReference type="InterPro" id="IPR024119">
    <property type="entry name" value="TF_DEAF-1"/>
</dbReference>
<dbReference type="InterPro" id="IPR002893">
    <property type="entry name" value="Znf_MYND"/>
</dbReference>
<dbReference type="PANTHER" id="PTHR10237:SF1">
    <property type="entry name" value="DEFORMED EPIDERMAL AUTOREGULATORY FACTOR 1 HOMOLOG"/>
    <property type="match status" value="1"/>
</dbReference>
<dbReference type="PANTHER" id="PTHR10237">
    <property type="entry name" value="DEFORMED EPIDERMAL AUTOREGULATORY FACTOR 1 HOMOLOG SUPPRESSIN"/>
    <property type="match status" value="1"/>
</dbReference>
<dbReference type="Pfam" id="PF01342">
    <property type="entry name" value="SAND"/>
    <property type="match status" value="1"/>
</dbReference>
<dbReference type="Pfam" id="PF01753">
    <property type="entry name" value="zf-MYND"/>
    <property type="match status" value="1"/>
</dbReference>
<dbReference type="SMART" id="SM00258">
    <property type="entry name" value="SAND"/>
    <property type="match status" value="1"/>
</dbReference>
<dbReference type="SUPFAM" id="SSF144232">
    <property type="entry name" value="HIT/MYND zinc finger-like"/>
    <property type="match status" value="1"/>
</dbReference>
<dbReference type="SUPFAM" id="SSF63763">
    <property type="entry name" value="SAND domain-like"/>
    <property type="match status" value="1"/>
</dbReference>
<dbReference type="PROSITE" id="PS50864">
    <property type="entry name" value="SAND"/>
    <property type="match status" value="1"/>
</dbReference>
<dbReference type="PROSITE" id="PS01360">
    <property type="entry name" value="ZF_MYND_1"/>
    <property type="match status" value="1"/>
</dbReference>
<dbReference type="PROSITE" id="PS50865">
    <property type="entry name" value="ZF_MYND_2"/>
    <property type="match status" value="1"/>
</dbReference>
<protein>
    <recommendedName>
        <fullName>Deformed epidermal autoregulatory factor 1 homolog</fullName>
    </recommendedName>
    <alternativeName>
        <fullName>Nuclear DEAF-1-related transcriptional regulator</fullName>
        <shortName>NUDR</shortName>
    </alternativeName>
    <alternativeName>
        <fullName>Suppressin</fullName>
    </alternativeName>
    <alternativeName>
        <fullName>Zinc finger MYND domain-containing protein 5</fullName>
    </alternativeName>
</protein>
<gene>
    <name type="primary">DEAF1</name>
    <name type="synonym">SPN</name>
    <name type="synonym">ZMYND5</name>
</gene>
<keyword id="KW-0002">3D-structure</keyword>
<keyword id="KW-0025">Alternative splicing</keyword>
<keyword id="KW-0963">Cytoplasm</keyword>
<keyword id="KW-0217">Developmental protein</keyword>
<keyword id="KW-0225">Disease variant</keyword>
<keyword id="KW-0238">DNA-binding</keyword>
<keyword id="KW-0887">Epilepsy</keyword>
<keyword id="KW-0991">Intellectual disability</keyword>
<keyword id="KW-0479">Metal-binding</keyword>
<keyword id="KW-0524">Neurogenesis</keyword>
<keyword id="KW-0539">Nucleus</keyword>
<keyword id="KW-0597">Phosphoprotein</keyword>
<keyword id="KW-1267">Proteomics identification</keyword>
<keyword id="KW-1185">Reference proteome</keyword>
<keyword id="KW-0964">Secreted</keyword>
<keyword id="KW-0804">Transcription</keyword>
<keyword id="KW-0805">Transcription regulation</keyword>
<keyword id="KW-0862">Zinc</keyword>
<keyword id="KW-0863">Zinc-finger</keyword>
<reference key="1">
    <citation type="journal article" date="1998" name="Mol. Endocrinol.">
        <title>Characterization of a nuclear deformed epidermal autoregulatory factor-1 (DEAF-1)-related (NUDR) transcriptional regulator protein.</title>
        <authorList>
            <person name="Huggenvik J.I."/>
            <person name="Michelson R.J."/>
            <person name="Collard M.W."/>
            <person name="Ziemba A.J."/>
            <person name="Gurley P."/>
            <person name="Mowen K.A."/>
        </authorList>
    </citation>
    <scope>NUCLEOTIDE SEQUENCE [MRNA] (ISOFORMS 1 AND 2)</scope>
    <scope>MUTAGENESIS OF ARG-302 AND LYS-304</scope>
    <source>
        <tissue>Choriocarcinoma</tissue>
    </source>
</reference>
<reference key="2">
    <citation type="journal article" date="2001" name="Clin. Cancer Res.">
        <title>Altered subcellular localization of suppressin, a novel inhibitor of cell-cycle entry, is an independent prognostic factor in colorectal adenocarcinomas.</title>
        <authorList>
            <person name="Manne U."/>
            <person name="Gary B.D."/>
            <person name="Oelschlager D.K."/>
            <person name="Weiss H.L."/>
            <person name="Frost A.R."/>
            <person name="Grizzle W.E."/>
        </authorList>
    </citation>
    <scope>NUCLEOTIDE SEQUENCE [MRNA] (ISOFORM 3)</scope>
    <scope>VARIANTS VAL-186; ASN-191; ILE-191; 199-TYR--GLU-202 DELINS CYS-ASP-ASN-ASP; ASP-202; LYS-218; 350-ASP--ALA-352 DELINS GLY-GLN-THR; HIS-356; ASN-364; HIS-367; LEU-370; PHE-397; ALA-442; LYS-449; 451-ARG-SER-452 DELINS GLY-ILE; HIS-468; LEU-479; LYS-498; ASN-526; LEU-530; 537-GLN-HIS-538 DELINS HIS-LEU; HIS-542; GLY-545 AND VAL-545</scope>
    <scope>ROLE IN NEOPLASIA</scope>
    <source>
        <tissue>Colon</tissue>
        <tissue>Colon adenocarcinoma</tissue>
    </source>
</reference>
<reference key="3">
    <citation type="journal article" date="2009" name="Nat. Immunol.">
        <title>Deaf1 isoforms control the expression of genes encoding peripheral tissue antigens in the pancreatic lymph nodes during type 1 diabetes.</title>
        <authorList>
            <person name="Yip L."/>
            <person name="Su L."/>
            <person name="Sheng D."/>
            <person name="Chang P."/>
            <person name="Atkinson M."/>
            <person name="Czesak M."/>
            <person name="Albert P.R."/>
            <person name="Collier A.R."/>
            <person name="Turley S.J."/>
            <person name="Fathman C.G."/>
            <person name="Creusot R.J."/>
        </authorList>
    </citation>
    <scope>NUCLEOTIDE SEQUENCE [MRNA] (ISOFORM 4)</scope>
    <scope>FUNCTION</scope>
    <scope>SUBCELLULAR LOCATION</scope>
    <scope>TISSUE SPECIFICITY</scope>
    <source>
        <tissue>Pancreas</tissue>
    </source>
</reference>
<reference key="4">
    <citation type="submission" date="1997-06" db="EMBL/GenBank/DDBJ databases">
        <title>Cloning and sequence analysis of the cDNA for human suppressin (spn).</title>
        <authorList>
            <person name="LeBoeuf R.D."/>
            <person name="Blalock J.E."/>
            <person name="Tauber J.D."/>
        </authorList>
    </citation>
    <scope>NUCLEOTIDE SEQUENCE [MRNA] (ISOFORM 3)</scope>
    <source>
        <tissue>Mammary gland</tissue>
    </source>
</reference>
<reference key="5">
    <citation type="journal article" date="2004" name="Nat. Genet.">
        <title>Complete sequencing and characterization of 21,243 full-length human cDNAs.</title>
        <authorList>
            <person name="Ota T."/>
            <person name="Suzuki Y."/>
            <person name="Nishikawa T."/>
            <person name="Otsuki T."/>
            <person name="Sugiyama T."/>
            <person name="Irie R."/>
            <person name="Wakamatsu A."/>
            <person name="Hayashi K."/>
            <person name="Sato H."/>
            <person name="Nagai K."/>
            <person name="Kimura K."/>
            <person name="Makita H."/>
            <person name="Sekine M."/>
            <person name="Obayashi M."/>
            <person name="Nishi T."/>
            <person name="Shibahara T."/>
            <person name="Tanaka T."/>
            <person name="Ishii S."/>
            <person name="Yamamoto J."/>
            <person name="Saito K."/>
            <person name="Kawai Y."/>
            <person name="Isono Y."/>
            <person name="Nakamura Y."/>
            <person name="Nagahari K."/>
            <person name="Murakami K."/>
            <person name="Yasuda T."/>
            <person name="Iwayanagi T."/>
            <person name="Wagatsuma M."/>
            <person name="Shiratori A."/>
            <person name="Sudo H."/>
            <person name="Hosoiri T."/>
            <person name="Kaku Y."/>
            <person name="Kodaira H."/>
            <person name="Kondo H."/>
            <person name="Sugawara M."/>
            <person name="Takahashi M."/>
            <person name="Kanda K."/>
            <person name="Yokoi T."/>
            <person name="Furuya T."/>
            <person name="Kikkawa E."/>
            <person name="Omura Y."/>
            <person name="Abe K."/>
            <person name="Kamihara K."/>
            <person name="Katsuta N."/>
            <person name="Sato K."/>
            <person name="Tanikawa M."/>
            <person name="Yamazaki M."/>
            <person name="Ninomiya K."/>
            <person name="Ishibashi T."/>
            <person name="Yamashita H."/>
            <person name="Murakawa K."/>
            <person name="Fujimori K."/>
            <person name="Tanai H."/>
            <person name="Kimata M."/>
            <person name="Watanabe M."/>
            <person name="Hiraoka S."/>
            <person name="Chiba Y."/>
            <person name="Ishida S."/>
            <person name="Ono Y."/>
            <person name="Takiguchi S."/>
            <person name="Watanabe S."/>
            <person name="Yosida M."/>
            <person name="Hotuta T."/>
            <person name="Kusano J."/>
            <person name="Kanehori K."/>
            <person name="Takahashi-Fujii A."/>
            <person name="Hara H."/>
            <person name="Tanase T.-O."/>
            <person name="Nomura Y."/>
            <person name="Togiya S."/>
            <person name="Komai F."/>
            <person name="Hara R."/>
            <person name="Takeuchi K."/>
            <person name="Arita M."/>
            <person name="Imose N."/>
            <person name="Musashino K."/>
            <person name="Yuuki H."/>
            <person name="Oshima A."/>
            <person name="Sasaki N."/>
            <person name="Aotsuka S."/>
            <person name="Yoshikawa Y."/>
            <person name="Matsunawa H."/>
            <person name="Ichihara T."/>
            <person name="Shiohata N."/>
            <person name="Sano S."/>
            <person name="Moriya S."/>
            <person name="Momiyama H."/>
            <person name="Satoh N."/>
            <person name="Takami S."/>
            <person name="Terashima Y."/>
            <person name="Suzuki O."/>
            <person name="Nakagawa S."/>
            <person name="Senoh A."/>
            <person name="Mizoguchi H."/>
            <person name="Goto Y."/>
            <person name="Shimizu F."/>
            <person name="Wakebe H."/>
            <person name="Hishigaki H."/>
            <person name="Watanabe T."/>
            <person name="Sugiyama A."/>
            <person name="Takemoto M."/>
            <person name="Kawakami B."/>
            <person name="Yamazaki M."/>
            <person name="Watanabe K."/>
            <person name="Kumagai A."/>
            <person name="Itakura S."/>
            <person name="Fukuzumi Y."/>
            <person name="Fujimori Y."/>
            <person name="Komiyama M."/>
            <person name="Tashiro H."/>
            <person name="Tanigami A."/>
            <person name="Fujiwara T."/>
            <person name="Ono T."/>
            <person name="Yamada K."/>
            <person name="Fujii Y."/>
            <person name="Ozaki K."/>
            <person name="Hirao M."/>
            <person name="Ohmori Y."/>
            <person name="Kawabata A."/>
            <person name="Hikiji T."/>
            <person name="Kobatake N."/>
            <person name="Inagaki H."/>
            <person name="Ikema Y."/>
            <person name="Okamoto S."/>
            <person name="Okitani R."/>
            <person name="Kawakami T."/>
            <person name="Noguchi S."/>
            <person name="Itoh T."/>
            <person name="Shigeta K."/>
            <person name="Senba T."/>
            <person name="Matsumura K."/>
            <person name="Nakajima Y."/>
            <person name="Mizuno T."/>
            <person name="Morinaga M."/>
            <person name="Sasaki M."/>
            <person name="Togashi T."/>
            <person name="Oyama M."/>
            <person name="Hata H."/>
            <person name="Watanabe M."/>
            <person name="Komatsu T."/>
            <person name="Mizushima-Sugano J."/>
            <person name="Satoh T."/>
            <person name="Shirai Y."/>
            <person name="Takahashi Y."/>
            <person name="Nakagawa K."/>
            <person name="Okumura K."/>
            <person name="Nagase T."/>
            <person name="Nomura N."/>
            <person name="Kikuchi H."/>
            <person name="Masuho Y."/>
            <person name="Yamashita R."/>
            <person name="Nakai K."/>
            <person name="Yada T."/>
            <person name="Nakamura Y."/>
            <person name="Ohara O."/>
            <person name="Isogai T."/>
            <person name="Sugano S."/>
        </authorList>
    </citation>
    <scope>NUCLEOTIDE SEQUENCE [LARGE SCALE MRNA] (ISOFORMS 1 AND 3)</scope>
    <source>
        <tissue>Brain</tissue>
        <tissue>Caudate nucleus</tissue>
    </source>
</reference>
<reference key="6">
    <citation type="journal article" date="2004" name="Genome Res.">
        <title>The status, quality, and expansion of the NIH full-length cDNA project: the Mammalian Gene Collection (MGC).</title>
        <authorList>
            <consortium name="The MGC Project Team"/>
        </authorList>
    </citation>
    <scope>NUCLEOTIDE SEQUENCE [LARGE SCALE MRNA] (ISOFORM 1)</scope>
    <source>
        <tissue>Ovary</tissue>
    </source>
</reference>
<reference key="7">
    <citation type="journal article" date="1999" name="J. Biol. Chem.">
        <title>Nuclear DEAF-1-related (NUDR) protein contains a novel DNA binding domain and represses transcription of the heterogeneous nuclear ribonucleoprotein A2/B1 promoter.</title>
        <authorList>
            <person name="Michelson R.J."/>
            <person name="Collard M.W."/>
            <person name="Ziemba A.J."/>
            <person name="Persinger J."/>
            <person name="Bartholomew B."/>
            <person name="Huggenvik J.I."/>
        </authorList>
    </citation>
    <scope>FUNCTION</scope>
</reference>
<reference key="8">
    <citation type="journal article" date="2001" name="Nat. Struct. Biol.">
        <title>The SAND domain structure defines a novel DNA-binding fold in transcriptional regulation.</title>
        <authorList>
            <person name="Bottomley M.J."/>
            <person name="Collard M.W."/>
            <person name="Huggenvik J.I."/>
            <person name="Liu Z."/>
            <person name="Gibson T.J."/>
            <person name="Sattler M."/>
        </authorList>
    </citation>
    <scope>FUNCTION OF SAND DOMAIN</scope>
    <scope>MUTAGENESIS OF TYR-215; ARG-226; ARG-246; LYS-250; TRP-252 AND LYS-253</scope>
</reference>
<reference key="9">
    <citation type="journal article" date="2008" name="BMC Dev. Biol.">
        <title>Deaf-1 regulates epithelial cell proliferation and side-branching in the mammary gland.</title>
        <authorList>
            <person name="Barker H.E."/>
            <person name="Smyth G.K."/>
            <person name="Wettenhall J."/>
            <person name="Ward T.A."/>
            <person name="Bath M.L."/>
            <person name="Lindeman G.J."/>
            <person name="Visvader J.E."/>
        </authorList>
    </citation>
    <scope>FUNCTION</scope>
</reference>
<reference key="10">
    <citation type="journal article" date="2009" name="Anal. Chem.">
        <title>Lys-N and trypsin cover complementary parts of the phosphoproteome in a refined SCX-based approach.</title>
        <authorList>
            <person name="Gauci S."/>
            <person name="Helbig A.O."/>
            <person name="Slijper M."/>
            <person name="Krijgsveld J."/>
            <person name="Heck A.J."/>
            <person name="Mohammed S."/>
        </authorList>
    </citation>
    <scope>IDENTIFICATION BY MASS SPECTROMETRY [LARGE SCALE ANALYSIS]</scope>
</reference>
<reference key="11">
    <citation type="journal article" date="2012" name="PLoS ONE">
        <title>Deformed epidermal autoregulatory factor-1 (DEAF1) interacts with the Ku70 subunit of the DNA-dependent protein kinase complex.</title>
        <authorList>
            <person name="Jensik P.J."/>
            <person name="Huggenvik J.I."/>
            <person name="Collard M.W."/>
        </authorList>
    </citation>
    <scope>DNA-BINDING</scope>
    <scope>IDENTIFICATION IN A COMPLEX WITH XRCC5 AND XRCC6</scope>
    <scope>SUBCELLULAR LOCATION</scope>
    <scope>PHOSPHORYLATION BY DNA-PK COMPLEX</scope>
</reference>
<reference key="12">
    <citation type="journal article" date="2013" name="J. Proteome Res.">
        <title>Toward a comprehensive characterization of a human cancer cell phosphoproteome.</title>
        <authorList>
            <person name="Zhou H."/>
            <person name="Di Palma S."/>
            <person name="Preisinger C."/>
            <person name="Peng M."/>
            <person name="Polat A.N."/>
            <person name="Heck A.J."/>
            <person name="Mohammed S."/>
        </authorList>
    </citation>
    <scope>PHOSPHORYLATION [LARGE SCALE ANALYSIS] AT SER-176 AND THR-432</scope>
    <scope>IDENTIFICATION BY MASS SPECTROMETRY [LARGE SCALE ANALYSIS]</scope>
    <source>
        <tissue>Cervix carcinoma</tissue>
        <tissue>Erythroleukemia</tissue>
    </source>
</reference>
<reference key="13">
    <citation type="journal article" date="2014" name="Am. J. Hum. Genet.">
        <title>Mutations affecting the SAND domain of DEAF1 cause intellectual disability with severe speech impairment and behavioral problems.</title>
        <authorList>
            <person name="Vulto-van Silfhout A.T."/>
            <person name="Rajamanickam S."/>
            <person name="Jensik P.J."/>
            <person name="Vergult S."/>
            <person name="de Rocker N."/>
            <person name="Newhall K.J."/>
            <person name="Raghavan R."/>
            <person name="Reardon S.N."/>
            <person name="Jarrett K."/>
            <person name="McIntyre T."/>
            <person name="Bulinski J."/>
            <person name="Ownby S.L."/>
            <person name="Huggenvik J.I."/>
            <person name="McKnight G.S."/>
            <person name="Rose G.M."/>
            <person name="Cai X."/>
            <person name="Willaert A."/>
            <person name="Zweier C."/>
            <person name="Endele S."/>
            <person name="de Ligt J."/>
            <person name="van Bon B.W."/>
            <person name="Lugtenberg D."/>
            <person name="de Vries P.F."/>
            <person name="Veltman J.A."/>
            <person name="van Bokhoven H."/>
            <person name="Brunner H.G."/>
            <person name="Rauch A."/>
            <person name="de Brouwer A.P."/>
            <person name="Carvill G.L."/>
            <person name="Hoischen A."/>
            <person name="Mefford H.C."/>
            <person name="Eichler E.E."/>
            <person name="Vissers L.E."/>
            <person name="Menten B."/>
            <person name="Collard M.W."/>
            <person name="de Vries B.B."/>
        </authorList>
    </citation>
    <scope>FUNCTION</scope>
    <scope>INTERACTION WITH XRCC6</scope>
    <scope>DNA-BINDING</scope>
    <scope>TISSUE SPECIFICITY</scope>
    <scope>INVOLVEMENT IN VSVS</scope>
    <scope>VARIANTS VSVS TRP-224; SER-228; SER-254 AND PRO-264</scope>
    <scope>CHARACTERIZATION OF VARIANTS VSVS TRP-224; SER-228; SER-254 AND PRO-264</scope>
    <scope>MUTAGENESIS OF LYS-250 AND LYS-253</scope>
</reference>
<reference key="14">
    <citation type="journal article" date="2006" name="J. Mol. Biol.">
        <title>Structure and functional analysis of the MYND domain.</title>
        <authorList>
            <person name="Spadaccini R."/>
            <person name="Perrin H."/>
            <person name="Bottomley M.J."/>
            <person name="Ansieau S."/>
            <person name="Sattler M."/>
        </authorList>
    </citation>
    <scope>STRUCTURE BY NMR OF 496-544 IN COMPLEX WITH ZINC IONS</scope>
    <scope>RETRACTED PAPER</scope>
</reference>
<reference key="15">
    <citation type="journal article" date="2008" name="J. Mol. Biol.">
        <title>Retraction notice to 'Structure and functional analysis of the MYND domain' [J. Mol. Biol. (2006) 358, 498-508].</title>
        <authorList>
            <person name="Spadaccini R."/>
            <person name="Perrin H."/>
            <person name="Bottomley M.J."/>
            <person name="Ansieau S."/>
            <person name="Sattler M."/>
        </authorList>
    </citation>
    <scope>RETRACTION NOTICE OF PUBMED:16527309</scope>
</reference>
<reference key="16">
    <citation type="journal article" date="2013" name="PLoS ONE">
        <title>Structural and functional analysis of the DEAF-1 and BS69 MYND domains.</title>
        <authorList>
            <person name="Kateb F."/>
            <person name="Perrin H."/>
            <person name="Tripsianes K."/>
            <person name="Zou P."/>
            <person name="Spadaccini R."/>
            <person name="Bottomley M."/>
            <person name="Franzmann T.M."/>
            <person name="Buchner J."/>
            <person name="Ansieau S."/>
            <person name="Sattler M."/>
        </authorList>
    </citation>
    <scope>STRUCTURE BY NMR OF 501-544 IN COMPLEX WITH ZINC IONS</scope>
    <scope>SUBUNIT</scope>
    <scope>INTERACTION WITH NCOR1 AND NCOR2</scope>
    <scope>MUTAGENESIS OF HIS-538</scope>
</reference>
<reference key="17">
    <citation type="journal article" date="2010" name="Nat. Genet.">
        <title>A de novo paradigm for mental retardation.</title>
        <authorList>
            <person name="Vissers L.E."/>
            <person name="de Ligt J."/>
            <person name="Gilissen C."/>
            <person name="Janssen I."/>
            <person name="Steehouwer M."/>
            <person name="de Vries P."/>
            <person name="van Lier B."/>
            <person name="Arts P."/>
            <person name="Wieskamp N."/>
            <person name="del Rosario M."/>
            <person name="van Bon B.W."/>
            <person name="Hoischen A."/>
            <person name="de Vries B.B."/>
            <person name="Brunner H.G."/>
            <person name="Veltman J.A."/>
        </authorList>
    </citation>
    <scope>INVOLVEMENT IN VSVS</scope>
    <scope>VARIANT SER-228</scope>
</reference>
<reference key="18">
    <citation type="journal article" date="2015" name="J. Med. Genet.">
        <title>Recessive DEAF1 mutation associates with autism, intellectual disability, basal ganglia dysfunction and epilepsy.</title>
        <authorList>
            <person name="Rajab A."/>
            <person name="Schuelke M."/>
            <person name="Gill E."/>
            <person name="Zwirner A."/>
            <person name="Seifert F."/>
            <person name="Morales Gonzalez S."/>
            <person name="Knierim E."/>
        </authorList>
    </citation>
    <scope>INVOLVEMENT IN NEDHELS</scope>
</reference>
<reference key="19">
    <citation type="journal article" date="2014" name="Am. J. Med. Genet. A">
        <title>Novel homozygous DEAF1 variant suspected in causing white matter disease, intellectual disability, and microcephaly.</title>
        <authorList>
            <person name="Faqeih E.A."/>
            <person name="Al-Owain M."/>
            <person name="Colak D."/>
            <person name="Kenana R."/>
            <person name="Al-Yafee Y."/>
            <person name="Al-Dosary M."/>
            <person name="Al-Saman A."/>
            <person name="Albalawi F."/>
            <person name="Al-Sarar D."/>
            <person name="Domiaty D."/>
            <person name="Daghestani M."/>
            <person name="Kaya N."/>
        </authorList>
    </citation>
    <scope>VARIANT TRP-226</scope>
</reference>
<organism>
    <name type="scientific">Homo sapiens</name>
    <name type="common">Human</name>
    <dbReference type="NCBI Taxonomy" id="9606"/>
    <lineage>
        <taxon>Eukaryota</taxon>
        <taxon>Metazoa</taxon>
        <taxon>Chordata</taxon>
        <taxon>Craniata</taxon>
        <taxon>Vertebrata</taxon>
        <taxon>Euteleostomi</taxon>
        <taxon>Mammalia</taxon>
        <taxon>Eutheria</taxon>
        <taxon>Euarchontoglires</taxon>
        <taxon>Primates</taxon>
        <taxon>Haplorrhini</taxon>
        <taxon>Catarrhini</taxon>
        <taxon>Hominidae</taxon>
        <taxon>Homo</taxon>
    </lineage>
</organism>
<accession>O75398</accession>
<accession>A8K1F8</accession>
<accession>A8K5R8</accession>
<accession>C7T5V5</accession>
<accession>O15152</accession>
<accession>O75399</accession>
<accession>O75510</accession>
<accession>O75511</accession>
<accession>O75512</accession>
<accession>O75513</accession>
<accession>Q9UET1</accession>